<name>FABP6_MOUSE</name>
<sequence length="128" mass="14486">MAFSGKYEFESEKNYDEFMKRLGLPGDVIERGRNFKIITEVQQDGQDFTWSQSYSGGNIMSNKFTIGKECEMQTMGGKKFKATVKMEGGKVVAEFPNYHQTSEVVGDKLVEISTIGDVTYERVSKRLA</sequence>
<dbReference type="EMBL" id="U00938">
    <property type="protein sequence ID" value="AAC27352.1"/>
    <property type="molecule type" value="Genomic_DNA"/>
</dbReference>
<dbReference type="EMBL" id="AL670472">
    <property type="status" value="NOT_ANNOTATED_CDS"/>
    <property type="molecule type" value="Genomic_DNA"/>
</dbReference>
<dbReference type="EMBL" id="CH466575">
    <property type="protein sequence ID" value="EDL33855.1"/>
    <property type="molecule type" value="Genomic_DNA"/>
</dbReference>
<dbReference type="EMBL" id="BC119289">
    <property type="protein sequence ID" value="AAI19290.1"/>
    <property type="molecule type" value="mRNA"/>
</dbReference>
<dbReference type="EMBL" id="BC120767">
    <property type="protein sequence ID" value="AAI20768.1"/>
    <property type="molecule type" value="mRNA"/>
</dbReference>
<dbReference type="CCDS" id="CCDS24560.1"/>
<dbReference type="PIR" id="A54797">
    <property type="entry name" value="A54797"/>
</dbReference>
<dbReference type="RefSeq" id="NP_032401.1">
    <property type="nucleotide sequence ID" value="NM_008375.2"/>
</dbReference>
<dbReference type="SMR" id="P51162"/>
<dbReference type="BioGRID" id="200650">
    <property type="interactions" value="1"/>
</dbReference>
<dbReference type="FunCoup" id="P51162">
    <property type="interactions" value="1598"/>
</dbReference>
<dbReference type="IntAct" id="P51162">
    <property type="interactions" value="1"/>
</dbReference>
<dbReference type="STRING" id="10090.ENSMUSP00000020672"/>
<dbReference type="PhosphoSitePlus" id="P51162"/>
<dbReference type="PaxDb" id="10090-ENSMUSP00000020672"/>
<dbReference type="PeptideAtlas" id="P51162"/>
<dbReference type="ProteomicsDB" id="271548"/>
<dbReference type="Antibodypedia" id="1989">
    <property type="antibodies" value="236 antibodies from 31 providers"/>
</dbReference>
<dbReference type="DNASU" id="16204"/>
<dbReference type="Ensembl" id="ENSMUST00000020672.5">
    <property type="protein sequence ID" value="ENSMUSP00000020672.5"/>
    <property type="gene ID" value="ENSMUSG00000020405.5"/>
</dbReference>
<dbReference type="GeneID" id="16204"/>
<dbReference type="KEGG" id="mmu:16204"/>
<dbReference type="UCSC" id="uc007imt.2">
    <property type="organism name" value="mouse"/>
</dbReference>
<dbReference type="AGR" id="MGI:96565"/>
<dbReference type="CTD" id="2172"/>
<dbReference type="MGI" id="MGI:96565">
    <property type="gene designation" value="Fabp6"/>
</dbReference>
<dbReference type="VEuPathDB" id="HostDB:ENSMUSG00000020405"/>
<dbReference type="eggNOG" id="KOG4015">
    <property type="taxonomic scope" value="Eukaryota"/>
</dbReference>
<dbReference type="GeneTree" id="ENSGT00940000157139"/>
<dbReference type="HOGENOM" id="CLU_113772_4_0_1"/>
<dbReference type="InParanoid" id="P51162"/>
<dbReference type="OMA" id="KCIGIPS"/>
<dbReference type="OrthoDB" id="10016075at2759"/>
<dbReference type="PhylomeDB" id="P51162"/>
<dbReference type="TreeFam" id="TF330348"/>
<dbReference type="Reactome" id="R-MMU-159418">
    <property type="pathway name" value="Recycling of bile acids and salts"/>
</dbReference>
<dbReference type="Reactome" id="R-MMU-163560">
    <property type="pathway name" value="Triglyceride catabolism"/>
</dbReference>
<dbReference type="BioGRID-ORCS" id="16204">
    <property type="hits" value="2 hits in 82 CRISPR screens"/>
</dbReference>
<dbReference type="PRO" id="PR:P51162"/>
<dbReference type="Proteomes" id="UP000000589">
    <property type="component" value="Chromosome 11"/>
</dbReference>
<dbReference type="RNAct" id="P51162">
    <property type="molecule type" value="protein"/>
</dbReference>
<dbReference type="Bgee" id="ENSMUSG00000020405">
    <property type="expression patterns" value="Expressed in crypt of Lieberkuhn of small intestine and 50 other cell types or tissues"/>
</dbReference>
<dbReference type="GO" id="GO:0005737">
    <property type="term" value="C:cytoplasm"/>
    <property type="evidence" value="ECO:0007669"/>
    <property type="project" value="UniProtKB-SubCell"/>
</dbReference>
<dbReference type="GO" id="GO:0016020">
    <property type="term" value="C:membrane"/>
    <property type="evidence" value="ECO:0007669"/>
    <property type="project" value="UniProtKB-SubCell"/>
</dbReference>
<dbReference type="GO" id="GO:0008289">
    <property type="term" value="F:lipid binding"/>
    <property type="evidence" value="ECO:0007669"/>
    <property type="project" value="UniProtKB-KW"/>
</dbReference>
<dbReference type="GO" id="GO:0008206">
    <property type="term" value="P:bile acid metabolic process"/>
    <property type="evidence" value="ECO:0000304"/>
    <property type="project" value="MGI"/>
</dbReference>
<dbReference type="GO" id="GO:0006869">
    <property type="term" value="P:lipid transport"/>
    <property type="evidence" value="ECO:0007669"/>
    <property type="project" value="UniProtKB-KW"/>
</dbReference>
<dbReference type="FunFam" id="2.40.128.20:FF:000006">
    <property type="entry name" value="Fatty acid-binding protein, liver"/>
    <property type="match status" value="1"/>
</dbReference>
<dbReference type="Gene3D" id="2.40.128.20">
    <property type="match status" value="1"/>
</dbReference>
<dbReference type="InterPro" id="IPR012674">
    <property type="entry name" value="Calycin"/>
</dbReference>
<dbReference type="InterPro" id="IPR000463">
    <property type="entry name" value="Fatty_acid-bd"/>
</dbReference>
<dbReference type="InterPro" id="IPR031259">
    <property type="entry name" value="ILBP"/>
</dbReference>
<dbReference type="PANTHER" id="PTHR11955">
    <property type="entry name" value="FATTY ACID BINDING PROTEIN"/>
    <property type="match status" value="1"/>
</dbReference>
<dbReference type="Pfam" id="PF14651">
    <property type="entry name" value="Lipocalin_7"/>
    <property type="match status" value="1"/>
</dbReference>
<dbReference type="PRINTS" id="PR00178">
    <property type="entry name" value="FATTYACIDBP"/>
</dbReference>
<dbReference type="SUPFAM" id="SSF50814">
    <property type="entry name" value="Lipocalins"/>
    <property type="match status" value="1"/>
</dbReference>
<dbReference type="PROSITE" id="PS00214">
    <property type="entry name" value="FABP"/>
    <property type="match status" value="1"/>
</dbReference>
<gene>
    <name type="primary">Fabp6</name>
    <name type="synonym">Illbp</name>
</gene>
<comment type="function">
    <text evidence="1 5">Binds to bile acids and is involved in enterohepatic bile acid metabolism. Required for efficient apical to basolateral transport of conjugated bile acids in ileal enterocytes (PubMed:23251388). Stimulates gastric acid and pepsinogen secretion (By similarity).</text>
</comment>
<comment type="subcellular location">
    <subcellularLocation>
        <location evidence="4">Cytoplasm</location>
    </subcellularLocation>
    <subcellularLocation>
        <location>Membrane</location>
        <topology evidence="2">Peripheral membrane protein</topology>
        <orientation evidence="2">Cytoplasmic side</orientation>
    </subcellularLocation>
</comment>
<comment type="tissue specificity">
    <text evidence="6">Expressed in ovary granulosa and luteal cells.</text>
</comment>
<comment type="domain">
    <text evidence="1 3">Forms a beta-barrel structure that accommodates hydrophobic ligands in its interior. Can bind at least two ligands per molecule, however, the stoichiometry is debated.</text>
</comment>
<comment type="similarity">
    <text evidence="7">Belongs to the calycin superfamily. Fatty-acid binding protein (FABP) family.</text>
</comment>
<protein>
    <recommendedName>
        <fullName>Gastrotropin</fullName>
        <shortName>GT</shortName>
    </recommendedName>
    <alternativeName>
        <fullName>Fatty acid-binding protein 6</fullName>
    </alternativeName>
    <alternativeName>
        <fullName>Ileal lipid-binding protein</fullName>
        <shortName>ILBP</shortName>
    </alternativeName>
</protein>
<keyword id="KW-0007">Acetylation</keyword>
<keyword id="KW-0963">Cytoplasm</keyword>
<keyword id="KW-0445">Lipid transport</keyword>
<keyword id="KW-0446">Lipid-binding</keyword>
<keyword id="KW-0472">Membrane</keyword>
<keyword id="KW-1185">Reference proteome</keyword>
<keyword id="KW-0813">Transport</keyword>
<organism>
    <name type="scientific">Mus musculus</name>
    <name type="common">Mouse</name>
    <dbReference type="NCBI Taxonomy" id="10090"/>
    <lineage>
        <taxon>Eukaryota</taxon>
        <taxon>Metazoa</taxon>
        <taxon>Chordata</taxon>
        <taxon>Craniata</taxon>
        <taxon>Vertebrata</taxon>
        <taxon>Euteleostomi</taxon>
        <taxon>Mammalia</taxon>
        <taxon>Eutheria</taxon>
        <taxon>Euarchontoglires</taxon>
        <taxon>Glires</taxon>
        <taxon>Rodentia</taxon>
        <taxon>Myomorpha</taxon>
        <taxon>Muroidea</taxon>
        <taxon>Muridae</taxon>
        <taxon>Murinae</taxon>
        <taxon>Mus</taxon>
        <taxon>Mus</taxon>
    </lineage>
</organism>
<feature type="initiator methionine" description="Removed" evidence="1">
    <location>
        <position position="1"/>
    </location>
</feature>
<feature type="chain" id="PRO_0000067381" description="Gastrotropin">
    <location>
        <begin position="2"/>
        <end position="128"/>
    </location>
</feature>
<feature type="modified residue" description="N-acetylalanine" evidence="1">
    <location>
        <position position="2"/>
    </location>
</feature>
<reference key="1">
    <citation type="journal article" date="1994" name="J. Cell Biol.">
        <title>The mouse ileal lipid-binding protein gene: a model for studying axial patterning during gut morphogenesis.</title>
        <authorList>
            <person name="Crossman M.W."/>
            <person name="Hauft S.M."/>
            <person name="Gordon J.I."/>
        </authorList>
    </citation>
    <scope>NUCLEOTIDE SEQUENCE [GENOMIC DNA]</scope>
    <source>
        <strain>DBA/2J</strain>
        <tissue>Liver</tissue>
    </source>
</reference>
<reference key="2">
    <citation type="journal article" date="2009" name="PLoS Biol.">
        <title>Lineage-specific biology revealed by a finished genome assembly of the mouse.</title>
        <authorList>
            <person name="Church D.M."/>
            <person name="Goodstadt L."/>
            <person name="Hillier L.W."/>
            <person name="Zody M.C."/>
            <person name="Goldstein S."/>
            <person name="She X."/>
            <person name="Bult C.J."/>
            <person name="Agarwala R."/>
            <person name="Cherry J.L."/>
            <person name="DiCuccio M."/>
            <person name="Hlavina W."/>
            <person name="Kapustin Y."/>
            <person name="Meric P."/>
            <person name="Maglott D."/>
            <person name="Birtle Z."/>
            <person name="Marques A.C."/>
            <person name="Graves T."/>
            <person name="Zhou S."/>
            <person name="Teague B."/>
            <person name="Potamousis K."/>
            <person name="Churas C."/>
            <person name="Place M."/>
            <person name="Herschleb J."/>
            <person name="Runnheim R."/>
            <person name="Forrest D."/>
            <person name="Amos-Landgraf J."/>
            <person name="Schwartz D.C."/>
            <person name="Cheng Z."/>
            <person name="Lindblad-Toh K."/>
            <person name="Eichler E.E."/>
            <person name="Ponting C.P."/>
        </authorList>
    </citation>
    <scope>NUCLEOTIDE SEQUENCE [LARGE SCALE GENOMIC DNA]</scope>
    <source>
        <strain>C57BL/6J</strain>
    </source>
</reference>
<reference key="3">
    <citation type="submission" date="2005-09" db="EMBL/GenBank/DDBJ databases">
        <authorList>
            <person name="Mural R.J."/>
            <person name="Adams M.D."/>
            <person name="Myers E.W."/>
            <person name="Smith H.O."/>
            <person name="Venter J.C."/>
        </authorList>
    </citation>
    <scope>NUCLEOTIDE SEQUENCE [LARGE SCALE GENOMIC DNA]</scope>
</reference>
<reference key="4">
    <citation type="journal article" date="2004" name="Genome Res.">
        <title>The status, quality, and expansion of the NIH full-length cDNA project: the Mammalian Gene Collection (MGC).</title>
        <authorList>
            <consortium name="The MGC Project Team"/>
        </authorList>
    </citation>
    <scope>NUCLEOTIDE SEQUENCE [LARGE SCALE MRNA]</scope>
    <source>
        <tissue>Brain</tissue>
    </source>
</reference>
<reference key="5">
    <citation type="journal article" date="2012" name="PLoS ONE">
        <title>The ileal lipid binding protein is required for efficient absorption and transport of bile acids in the distal portion of the murine small intestine.</title>
        <authorList>
            <person name="Praslickova D."/>
            <person name="Torchia E.C."/>
            <person name="Sugiyama M.G."/>
            <person name="Magrane E.J."/>
            <person name="Zwicker B.L."/>
            <person name="Kolodzieyski L."/>
            <person name="Agellon L.B."/>
        </authorList>
    </citation>
    <scope>FUNCTION</scope>
</reference>
<reference key="6">
    <citation type="journal article" date="2015" name="J. Reprod. Dev.">
        <title>The fatty acid binding protein 6 gene (Fabp6) is expressed in murine granulosa cells and is involved in ovulatory response to superstimulation.</title>
        <authorList>
            <person name="Duggavathi R."/>
            <person name="Siddappa D."/>
            <person name="Schuermann Y."/>
            <person name="Pansera M."/>
            <person name="Menard I.J."/>
            <person name="Praslickova D."/>
            <person name="Agellon L.B."/>
        </authorList>
    </citation>
    <scope>TISSUE SPECIFICITY</scope>
</reference>
<evidence type="ECO:0000250" key="1">
    <source>
        <dbReference type="UniProtKB" id="P10289"/>
    </source>
</evidence>
<evidence type="ECO:0000250" key="2">
    <source>
        <dbReference type="UniProtKB" id="P50119"/>
    </source>
</evidence>
<evidence type="ECO:0000250" key="3">
    <source>
        <dbReference type="UniProtKB" id="P51161"/>
    </source>
</evidence>
<evidence type="ECO:0000250" key="4">
    <source>
        <dbReference type="UniProtKB" id="P80020"/>
    </source>
</evidence>
<evidence type="ECO:0000269" key="5">
    <source>
    </source>
</evidence>
<evidence type="ECO:0000269" key="6">
    <source>
    </source>
</evidence>
<evidence type="ECO:0000305" key="7"/>
<accession>P51162</accession>
<accession>Q5SRT9</accession>
<proteinExistence type="evidence at transcript level"/>